<sequence>MFGVLNSDDHRAAIQQRNILAFGRTSSELWTSNPTSNYWCETRGNGRDSGQNRVRRPMNAFMVWSRDQRRKVALENPQMQNSEISKQLGYQWKMLTEAEKWPFFEEAQRLQAVHREKYPDYKYRPRRKALPQKSDKLLPAASSSLLCRQVLVDKWYPFTYRDSCSRATHSHMEDQLSSSKPVNIANSLLQREHHYSSTSLRGSPETLATHLSADPPFYPK</sequence>
<reference key="1">
    <citation type="submission" date="2003-09" db="EMBL/GenBank/DDBJ databases">
        <title>A phylogeny of the pinnipeds from mitochondrial and single copy nuclear gene sequences.</title>
        <authorList>
            <person name="Kinnear M.W."/>
            <person name="Walker G."/>
            <person name="Amos W."/>
        </authorList>
    </citation>
    <scope>NUCLEOTIDE SEQUENCE [GENOMIC DNA]</scope>
</reference>
<keyword id="KW-0010">Activator</keyword>
<keyword id="KW-0112">Calmodulin-binding</keyword>
<keyword id="KW-0963">Cytoplasm</keyword>
<keyword id="KW-0221">Differentiation</keyword>
<keyword id="KW-0238">DNA-binding</keyword>
<keyword id="KW-0539">Nucleus</keyword>
<keyword id="KW-0726">Sexual differentiation</keyword>
<keyword id="KW-0804">Transcription</keyword>
<keyword id="KW-0805">Transcription regulation</keyword>
<accession>Q6TC44</accession>
<proteinExistence type="inferred from homology"/>
<gene>
    <name type="primary">SRY</name>
    <name type="synonym">TDF</name>
</gene>
<name>SRY_ARCGZ</name>
<evidence type="ECO:0000250" key="1">
    <source>
        <dbReference type="UniProtKB" id="P36394"/>
    </source>
</evidence>
<evidence type="ECO:0000250" key="2">
    <source>
        <dbReference type="UniProtKB" id="Q05066"/>
    </source>
</evidence>
<evidence type="ECO:0000255" key="3">
    <source>
        <dbReference type="PROSITE-ProRule" id="PRU00267"/>
    </source>
</evidence>
<evidence type="ECO:0000256" key="4">
    <source>
        <dbReference type="SAM" id="MobiDB-lite"/>
    </source>
</evidence>
<evidence type="ECO:0000305" key="5"/>
<dbReference type="EMBL" id="AY424651">
    <property type="protein sequence ID" value="AAR10362.1"/>
    <property type="molecule type" value="Genomic_DNA"/>
</dbReference>
<dbReference type="SMR" id="Q6TC44"/>
<dbReference type="GO" id="GO:0005737">
    <property type="term" value="C:cytoplasm"/>
    <property type="evidence" value="ECO:0007669"/>
    <property type="project" value="UniProtKB-SubCell"/>
</dbReference>
<dbReference type="GO" id="GO:0016607">
    <property type="term" value="C:nuclear speck"/>
    <property type="evidence" value="ECO:0007669"/>
    <property type="project" value="UniProtKB-SubCell"/>
</dbReference>
<dbReference type="GO" id="GO:0005634">
    <property type="term" value="C:nucleus"/>
    <property type="evidence" value="ECO:0000250"/>
    <property type="project" value="UniProtKB"/>
</dbReference>
<dbReference type="GO" id="GO:0005516">
    <property type="term" value="F:calmodulin binding"/>
    <property type="evidence" value="ECO:0007669"/>
    <property type="project" value="UniProtKB-KW"/>
</dbReference>
<dbReference type="GO" id="GO:0001228">
    <property type="term" value="F:DNA-binding transcription activator activity, RNA polymerase II-specific"/>
    <property type="evidence" value="ECO:0007669"/>
    <property type="project" value="TreeGrafter"/>
</dbReference>
<dbReference type="GO" id="GO:0000978">
    <property type="term" value="F:RNA polymerase II cis-regulatory region sequence-specific DNA binding"/>
    <property type="evidence" value="ECO:0007669"/>
    <property type="project" value="TreeGrafter"/>
</dbReference>
<dbReference type="GO" id="GO:0030154">
    <property type="term" value="P:cell differentiation"/>
    <property type="evidence" value="ECO:0007669"/>
    <property type="project" value="UniProtKB-KW"/>
</dbReference>
<dbReference type="GO" id="GO:0030238">
    <property type="term" value="P:male sex determination"/>
    <property type="evidence" value="ECO:0007669"/>
    <property type="project" value="InterPro"/>
</dbReference>
<dbReference type="GO" id="GO:0007548">
    <property type="term" value="P:sex differentiation"/>
    <property type="evidence" value="ECO:0007669"/>
    <property type="project" value="UniProtKB-KW"/>
</dbReference>
<dbReference type="CDD" id="cd22034">
    <property type="entry name" value="HMG-box_SoxA_SRY"/>
    <property type="match status" value="1"/>
</dbReference>
<dbReference type="FunFam" id="1.10.30.10:FF:000002">
    <property type="entry name" value="transcription factor Sox-2"/>
    <property type="match status" value="1"/>
</dbReference>
<dbReference type="Gene3D" id="1.10.30.10">
    <property type="entry name" value="High mobility group box domain"/>
    <property type="match status" value="1"/>
</dbReference>
<dbReference type="InterPro" id="IPR009071">
    <property type="entry name" value="HMG_box_dom"/>
</dbReference>
<dbReference type="InterPro" id="IPR036910">
    <property type="entry name" value="HMG_box_dom_sf"/>
</dbReference>
<dbReference type="InterPro" id="IPR017253">
    <property type="entry name" value="SRY"/>
</dbReference>
<dbReference type="InterPro" id="IPR050140">
    <property type="entry name" value="SRY-related_HMG-box_TF-like"/>
</dbReference>
<dbReference type="PANTHER" id="PTHR10270:SF161">
    <property type="entry name" value="SEX-DETERMINING REGION Y PROTEIN"/>
    <property type="match status" value="1"/>
</dbReference>
<dbReference type="PANTHER" id="PTHR10270">
    <property type="entry name" value="SOX TRANSCRIPTION FACTOR"/>
    <property type="match status" value="1"/>
</dbReference>
<dbReference type="Pfam" id="PF00505">
    <property type="entry name" value="HMG_box"/>
    <property type="match status" value="1"/>
</dbReference>
<dbReference type="PIRSF" id="PIRSF037653">
    <property type="entry name" value="SRY"/>
    <property type="match status" value="1"/>
</dbReference>
<dbReference type="SMART" id="SM00398">
    <property type="entry name" value="HMG"/>
    <property type="match status" value="1"/>
</dbReference>
<dbReference type="SUPFAM" id="SSF47095">
    <property type="entry name" value="HMG-box"/>
    <property type="match status" value="1"/>
</dbReference>
<dbReference type="PROSITE" id="PS50118">
    <property type="entry name" value="HMG_BOX_2"/>
    <property type="match status" value="1"/>
</dbReference>
<comment type="function">
    <text evidence="1 2">Transcriptional regulator that controls a genetic switch in male development. It is necessary and sufficient for initiating male sex determination by directing the development of supporting cell precursors (pre-Sertoli cells) as Sertoli rather than granulosa cells. Involved in different aspects of gene regulation including promoter activation or repression. Binds to the DNA consensus sequence 5'-[AT]AACAA[AT]-3'. SRY HMG box recognizes DNA by partial intercalation in the minor groove and promotes DNA bending. Also involved in pre-mRNA splicing (By similarity). In male adult brain involved in the maintenance of motor functions of dopaminergic neurons (By similarity).</text>
</comment>
<comment type="subunit">
    <text evidence="2">Interacts with CALM, EP300, HDAC3, KPNB1, ZNF208 isoform KRAB-O, PARP1, SLC9A3R2 and WT1. The interaction with EP300 modulates its DNA-binding activity. The interaction with KPNB1 is sensitive to dissociation by Ran in the GTP-bound form. Interaction with PARP1 impaired its DNA-binding activity.</text>
</comment>
<comment type="subcellular location">
    <subcellularLocation>
        <location evidence="2">Nucleus speckle</location>
    </subcellularLocation>
    <subcellularLocation>
        <location evidence="2">Cytoplasm</location>
    </subcellularLocation>
    <subcellularLocation>
        <location evidence="2">Nucleus</location>
    </subcellularLocation>
</comment>
<comment type="similarity">
    <text evidence="5">Belongs to the SRY family.</text>
</comment>
<comment type="online information" name="Protein Spotlight">
    <link uri="https://www.proteinspotlight.org/back_issues/080"/>
    <text>The tenuous nature of sex - Issue 80 of March 2007</text>
</comment>
<protein>
    <recommendedName>
        <fullName>Sex-determining region Y protein</fullName>
    </recommendedName>
    <alternativeName>
        <fullName>Testis-determining factor</fullName>
    </alternativeName>
</protein>
<feature type="chain" id="PRO_0000048636" description="Sex-determining region Y protein">
    <location>
        <begin position="1"/>
        <end position="220"/>
    </location>
</feature>
<feature type="DNA-binding region" description="HMG box" evidence="3">
    <location>
        <begin position="54"/>
        <end position="122"/>
    </location>
</feature>
<feature type="region of interest" description="Disordered" evidence="4">
    <location>
        <begin position="195"/>
        <end position="220"/>
    </location>
</feature>
<organism>
    <name type="scientific">Arctocephalus gazella</name>
    <name type="common">Antarctic fur seal</name>
    <dbReference type="NCBI Taxonomy" id="37190"/>
    <lineage>
        <taxon>Eukaryota</taxon>
        <taxon>Metazoa</taxon>
        <taxon>Chordata</taxon>
        <taxon>Craniata</taxon>
        <taxon>Vertebrata</taxon>
        <taxon>Euteleostomi</taxon>
        <taxon>Mammalia</taxon>
        <taxon>Eutheria</taxon>
        <taxon>Laurasiatheria</taxon>
        <taxon>Carnivora</taxon>
        <taxon>Caniformia</taxon>
        <taxon>Pinnipedia</taxon>
        <taxon>Otariidae</taxon>
        <taxon>Arctocephalus</taxon>
    </lineage>
</organism>